<gene>
    <name evidence="1" type="primary">glmM</name>
    <name type="ordered locus">BAA_0187</name>
</gene>
<comment type="function">
    <text evidence="1">Catalyzes the conversion of glucosamine-6-phosphate to glucosamine-1-phosphate.</text>
</comment>
<comment type="catalytic activity">
    <reaction evidence="1">
        <text>alpha-D-glucosamine 1-phosphate = D-glucosamine 6-phosphate</text>
        <dbReference type="Rhea" id="RHEA:23424"/>
        <dbReference type="ChEBI" id="CHEBI:58516"/>
        <dbReference type="ChEBI" id="CHEBI:58725"/>
        <dbReference type="EC" id="5.4.2.10"/>
    </reaction>
</comment>
<comment type="cofactor">
    <cofactor evidence="1">
        <name>Mg(2+)</name>
        <dbReference type="ChEBI" id="CHEBI:18420"/>
    </cofactor>
    <text evidence="1">Binds 1 Mg(2+) ion per subunit.</text>
</comment>
<comment type="PTM">
    <text evidence="1">Activated by phosphorylation.</text>
</comment>
<comment type="similarity">
    <text evidence="1">Belongs to the phosphohexose mutase family.</text>
</comment>
<evidence type="ECO:0000255" key="1">
    <source>
        <dbReference type="HAMAP-Rule" id="MF_01554"/>
    </source>
</evidence>
<accession>C3PAL5</accession>
<organism>
    <name type="scientific">Bacillus anthracis (strain A0248)</name>
    <dbReference type="NCBI Taxonomy" id="592021"/>
    <lineage>
        <taxon>Bacteria</taxon>
        <taxon>Bacillati</taxon>
        <taxon>Bacillota</taxon>
        <taxon>Bacilli</taxon>
        <taxon>Bacillales</taxon>
        <taxon>Bacillaceae</taxon>
        <taxon>Bacillus</taxon>
        <taxon>Bacillus cereus group</taxon>
    </lineage>
</organism>
<keyword id="KW-0413">Isomerase</keyword>
<keyword id="KW-0460">Magnesium</keyword>
<keyword id="KW-0479">Metal-binding</keyword>
<keyword id="KW-0597">Phosphoprotein</keyword>
<sequence length="448" mass="48417">MGKYFGTDGVRGVANKELTPELAFKIGRFGGYVLTKDTDRPKVIIGRDTRISGHMLEGALVAGLLSTGAEVMRLGVISTPGVAYLTKALDAQAGVMISASHNPVQDNGIKFFGSDGFKLTDEQEAEIEALLDKEVDELPRPTGTNLGQVSDYFEGGQKYLQYIKQTVEEDFSGLHIALDCAHGATSSLAPYLFADLEADISTMGTSPNGMNINDGVGSTHPEVLAELVKEKGADIGLAFDGDGDRLIAVDEKGNIVDGDQIMFICAKYMKETGQLKHNTVVSTVMSNLGFYKALEANGITSDKTAVGDRYVMEEMKRGGYNLGGEQSGHIILLDYITTGDGMLSALQLVNIMKMTKKPLSELAGEMTKFPQLLVNVRVTDKKLALENEKIKEIIRVVEEEMNGDGRILVRPSGTEPLIRVMAEAPTQEVCDAYVHRIVEVVKAEVGAE</sequence>
<reference key="1">
    <citation type="submission" date="2009-04" db="EMBL/GenBank/DDBJ databases">
        <title>Genome sequence of Bacillus anthracis A0248.</title>
        <authorList>
            <person name="Dodson R.J."/>
            <person name="Munk A.C."/>
            <person name="Bruce D."/>
            <person name="Detter C."/>
            <person name="Tapia R."/>
            <person name="Sutton G."/>
            <person name="Sims D."/>
            <person name="Brettin T."/>
        </authorList>
    </citation>
    <scope>NUCLEOTIDE SEQUENCE [LARGE SCALE GENOMIC DNA]</scope>
    <source>
        <strain>A0248</strain>
    </source>
</reference>
<protein>
    <recommendedName>
        <fullName evidence="1">Phosphoglucosamine mutase</fullName>
        <ecNumber evidence="1">5.4.2.10</ecNumber>
    </recommendedName>
</protein>
<feature type="chain" id="PRO_1000185348" description="Phosphoglucosamine mutase">
    <location>
        <begin position="1"/>
        <end position="448"/>
    </location>
</feature>
<feature type="active site" description="Phosphoserine intermediate" evidence="1">
    <location>
        <position position="100"/>
    </location>
</feature>
<feature type="binding site" description="via phosphate group" evidence="1">
    <location>
        <position position="100"/>
    </location>
    <ligand>
        <name>Mg(2+)</name>
        <dbReference type="ChEBI" id="CHEBI:18420"/>
    </ligand>
</feature>
<feature type="binding site" evidence="1">
    <location>
        <position position="240"/>
    </location>
    <ligand>
        <name>Mg(2+)</name>
        <dbReference type="ChEBI" id="CHEBI:18420"/>
    </ligand>
</feature>
<feature type="binding site" evidence="1">
    <location>
        <position position="242"/>
    </location>
    <ligand>
        <name>Mg(2+)</name>
        <dbReference type="ChEBI" id="CHEBI:18420"/>
    </ligand>
</feature>
<feature type="binding site" evidence="1">
    <location>
        <position position="244"/>
    </location>
    <ligand>
        <name>Mg(2+)</name>
        <dbReference type="ChEBI" id="CHEBI:18420"/>
    </ligand>
</feature>
<feature type="modified residue" description="Phosphoserine" evidence="1">
    <location>
        <position position="100"/>
    </location>
</feature>
<proteinExistence type="inferred from homology"/>
<dbReference type="EC" id="5.4.2.10" evidence="1"/>
<dbReference type="EMBL" id="CP001598">
    <property type="protein sequence ID" value="ACQ47834.1"/>
    <property type="molecule type" value="Genomic_DNA"/>
</dbReference>
<dbReference type="RefSeq" id="WP_000521474.1">
    <property type="nucleotide sequence ID" value="NC_012659.1"/>
</dbReference>
<dbReference type="SMR" id="C3PAL5"/>
<dbReference type="GeneID" id="75083449"/>
<dbReference type="KEGG" id="bai:BAA_0187"/>
<dbReference type="HOGENOM" id="CLU_016950_7_0_9"/>
<dbReference type="GO" id="GO:0005829">
    <property type="term" value="C:cytosol"/>
    <property type="evidence" value="ECO:0007669"/>
    <property type="project" value="TreeGrafter"/>
</dbReference>
<dbReference type="GO" id="GO:0000287">
    <property type="term" value="F:magnesium ion binding"/>
    <property type="evidence" value="ECO:0007669"/>
    <property type="project" value="UniProtKB-UniRule"/>
</dbReference>
<dbReference type="GO" id="GO:0008966">
    <property type="term" value="F:phosphoglucosamine mutase activity"/>
    <property type="evidence" value="ECO:0007669"/>
    <property type="project" value="UniProtKB-UniRule"/>
</dbReference>
<dbReference type="GO" id="GO:0004615">
    <property type="term" value="F:phosphomannomutase activity"/>
    <property type="evidence" value="ECO:0007669"/>
    <property type="project" value="TreeGrafter"/>
</dbReference>
<dbReference type="GO" id="GO:0005975">
    <property type="term" value="P:carbohydrate metabolic process"/>
    <property type="evidence" value="ECO:0007669"/>
    <property type="project" value="InterPro"/>
</dbReference>
<dbReference type="GO" id="GO:0009252">
    <property type="term" value="P:peptidoglycan biosynthetic process"/>
    <property type="evidence" value="ECO:0007669"/>
    <property type="project" value="TreeGrafter"/>
</dbReference>
<dbReference type="GO" id="GO:0006048">
    <property type="term" value="P:UDP-N-acetylglucosamine biosynthetic process"/>
    <property type="evidence" value="ECO:0007669"/>
    <property type="project" value="TreeGrafter"/>
</dbReference>
<dbReference type="CDD" id="cd05802">
    <property type="entry name" value="GlmM"/>
    <property type="match status" value="1"/>
</dbReference>
<dbReference type="FunFam" id="3.30.310.50:FF:000001">
    <property type="entry name" value="Phosphoglucosamine mutase"/>
    <property type="match status" value="1"/>
</dbReference>
<dbReference type="FunFam" id="3.40.120.10:FF:000001">
    <property type="entry name" value="Phosphoglucosamine mutase"/>
    <property type="match status" value="1"/>
</dbReference>
<dbReference type="FunFam" id="3.40.120.10:FF:000002">
    <property type="entry name" value="Phosphoglucosamine mutase"/>
    <property type="match status" value="1"/>
</dbReference>
<dbReference type="Gene3D" id="3.40.120.10">
    <property type="entry name" value="Alpha-D-Glucose-1,6-Bisphosphate, subunit A, domain 3"/>
    <property type="match status" value="3"/>
</dbReference>
<dbReference type="Gene3D" id="3.30.310.50">
    <property type="entry name" value="Alpha-D-phosphohexomutase, C-terminal domain"/>
    <property type="match status" value="1"/>
</dbReference>
<dbReference type="HAMAP" id="MF_01554_B">
    <property type="entry name" value="GlmM_B"/>
    <property type="match status" value="1"/>
</dbReference>
<dbReference type="InterPro" id="IPR005844">
    <property type="entry name" value="A-D-PHexomutase_a/b/a-I"/>
</dbReference>
<dbReference type="InterPro" id="IPR016055">
    <property type="entry name" value="A-D-PHexomutase_a/b/a-I/II/III"/>
</dbReference>
<dbReference type="InterPro" id="IPR005845">
    <property type="entry name" value="A-D-PHexomutase_a/b/a-II"/>
</dbReference>
<dbReference type="InterPro" id="IPR005846">
    <property type="entry name" value="A-D-PHexomutase_a/b/a-III"/>
</dbReference>
<dbReference type="InterPro" id="IPR005843">
    <property type="entry name" value="A-D-PHexomutase_C"/>
</dbReference>
<dbReference type="InterPro" id="IPR036900">
    <property type="entry name" value="A-D-PHexomutase_C_sf"/>
</dbReference>
<dbReference type="InterPro" id="IPR016066">
    <property type="entry name" value="A-D-PHexomutase_CS"/>
</dbReference>
<dbReference type="InterPro" id="IPR005841">
    <property type="entry name" value="Alpha-D-phosphohexomutase_SF"/>
</dbReference>
<dbReference type="InterPro" id="IPR006352">
    <property type="entry name" value="GlmM_bact"/>
</dbReference>
<dbReference type="InterPro" id="IPR050060">
    <property type="entry name" value="Phosphoglucosamine_mutase"/>
</dbReference>
<dbReference type="NCBIfam" id="TIGR01455">
    <property type="entry name" value="glmM"/>
    <property type="match status" value="1"/>
</dbReference>
<dbReference type="NCBIfam" id="NF008139">
    <property type="entry name" value="PRK10887.1"/>
    <property type="match status" value="1"/>
</dbReference>
<dbReference type="PANTHER" id="PTHR42946:SF1">
    <property type="entry name" value="PHOSPHOGLUCOMUTASE (ALPHA-D-GLUCOSE-1,6-BISPHOSPHATE-DEPENDENT)"/>
    <property type="match status" value="1"/>
</dbReference>
<dbReference type="PANTHER" id="PTHR42946">
    <property type="entry name" value="PHOSPHOHEXOSE MUTASE"/>
    <property type="match status" value="1"/>
</dbReference>
<dbReference type="Pfam" id="PF02878">
    <property type="entry name" value="PGM_PMM_I"/>
    <property type="match status" value="1"/>
</dbReference>
<dbReference type="Pfam" id="PF02879">
    <property type="entry name" value="PGM_PMM_II"/>
    <property type="match status" value="1"/>
</dbReference>
<dbReference type="Pfam" id="PF02880">
    <property type="entry name" value="PGM_PMM_III"/>
    <property type="match status" value="1"/>
</dbReference>
<dbReference type="Pfam" id="PF00408">
    <property type="entry name" value="PGM_PMM_IV"/>
    <property type="match status" value="1"/>
</dbReference>
<dbReference type="PRINTS" id="PR00509">
    <property type="entry name" value="PGMPMM"/>
</dbReference>
<dbReference type="SUPFAM" id="SSF55957">
    <property type="entry name" value="Phosphoglucomutase, C-terminal domain"/>
    <property type="match status" value="1"/>
</dbReference>
<dbReference type="SUPFAM" id="SSF53738">
    <property type="entry name" value="Phosphoglucomutase, first 3 domains"/>
    <property type="match status" value="3"/>
</dbReference>
<dbReference type="PROSITE" id="PS00710">
    <property type="entry name" value="PGM_PMM"/>
    <property type="match status" value="1"/>
</dbReference>
<name>GLMM_BACAA</name>